<proteinExistence type="evidence at protein level"/>
<evidence type="ECO:0000250" key="1">
    <source>
        <dbReference type="UniProtKB" id="Q9Y281"/>
    </source>
</evidence>
<evidence type="ECO:0000255" key="2"/>
<evidence type="ECO:0000255" key="3">
    <source>
        <dbReference type="PROSITE-ProRule" id="PRU00599"/>
    </source>
</evidence>
<evidence type="ECO:0000269" key="4">
    <source>
    </source>
</evidence>
<evidence type="ECO:0000269" key="5">
    <source>
    </source>
</evidence>
<evidence type="ECO:0000269" key="6">
    <source>
    </source>
</evidence>
<evidence type="ECO:0000305" key="7"/>
<evidence type="ECO:0007744" key="8">
    <source>
    </source>
</evidence>
<evidence type="ECO:0007744" key="9">
    <source>
    </source>
</evidence>
<protein>
    <recommendedName>
        <fullName>Cofilin-2</fullName>
    </recommendedName>
    <alternativeName>
        <fullName>Cofilin, muscle isoform</fullName>
    </alternativeName>
</protein>
<organism>
    <name type="scientific">Mus musculus</name>
    <name type="common">Mouse</name>
    <dbReference type="NCBI Taxonomy" id="10090"/>
    <lineage>
        <taxon>Eukaryota</taxon>
        <taxon>Metazoa</taxon>
        <taxon>Chordata</taxon>
        <taxon>Craniata</taxon>
        <taxon>Vertebrata</taxon>
        <taxon>Euteleostomi</taxon>
        <taxon>Mammalia</taxon>
        <taxon>Eutheria</taxon>
        <taxon>Euarchontoglires</taxon>
        <taxon>Glires</taxon>
        <taxon>Rodentia</taxon>
        <taxon>Myomorpha</taxon>
        <taxon>Muroidea</taxon>
        <taxon>Muridae</taxon>
        <taxon>Murinae</taxon>
        <taxon>Mus</taxon>
        <taxon>Mus</taxon>
    </lineage>
</organism>
<name>COF2_MOUSE</name>
<gene>
    <name type="primary">Cfl2</name>
</gene>
<sequence length="166" mass="18710">MASGVTVNDEVIKVFNDMKVRKSSTQEEIKKRKKAVLFCLSDDKRQIIVEEAKQILVGDIGDTVEDPYTSFVKLLPLNDCRYALYDATYETKESKKEDLVFIFWAPESAPLKSKMIYASSKDAIKKKFTGIKHEWQVNGLDDIKDRSTLGEKLGGSVVVSLEGKPL</sequence>
<dbReference type="EMBL" id="L29468">
    <property type="protein sequence ID" value="AAA37433.1"/>
    <property type="molecule type" value="mRNA"/>
</dbReference>
<dbReference type="EMBL" id="BC007138">
    <property type="protein sequence ID" value="AAH07138.1"/>
    <property type="molecule type" value="mRNA"/>
</dbReference>
<dbReference type="CCDS" id="CCDS36448.1"/>
<dbReference type="PIR" id="A53812">
    <property type="entry name" value="A53812"/>
</dbReference>
<dbReference type="RefSeq" id="NP_031714.1">
    <property type="nucleotide sequence ID" value="NM_007688.2"/>
</dbReference>
<dbReference type="BMRB" id="P45591"/>
<dbReference type="SMR" id="P45591"/>
<dbReference type="BioGRID" id="198685">
    <property type="interactions" value="10"/>
</dbReference>
<dbReference type="FunCoup" id="P45591">
    <property type="interactions" value="1440"/>
</dbReference>
<dbReference type="IntAct" id="P45591">
    <property type="interactions" value="3"/>
</dbReference>
<dbReference type="MINT" id="P45591"/>
<dbReference type="STRING" id="10090.ENSMUSP00000077262"/>
<dbReference type="GlyGen" id="P45591">
    <property type="glycosylation" value="1 site, 1 O-linked glycan (1 site)"/>
</dbReference>
<dbReference type="iPTMnet" id="P45591"/>
<dbReference type="PhosphoSitePlus" id="P45591"/>
<dbReference type="SwissPalm" id="P45591"/>
<dbReference type="REPRODUCTION-2DPAGE" id="P45591"/>
<dbReference type="jPOST" id="P45591"/>
<dbReference type="PaxDb" id="10090-ENSMUSP00000077262"/>
<dbReference type="PeptideAtlas" id="P45591"/>
<dbReference type="ProteomicsDB" id="283419"/>
<dbReference type="Pumba" id="P45591"/>
<dbReference type="Antibodypedia" id="9589">
    <property type="antibodies" value="341 antibodies from 37 providers"/>
</dbReference>
<dbReference type="DNASU" id="12632"/>
<dbReference type="Ensembl" id="ENSMUST00000078124.8">
    <property type="protein sequence ID" value="ENSMUSP00000077262.8"/>
    <property type="gene ID" value="ENSMUSG00000062929.9"/>
</dbReference>
<dbReference type="GeneID" id="12632"/>
<dbReference type="KEGG" id="mmu:12632"/>
<dbReference type="UCSC" id="uc007nnx.1">
    <property type="organism name" value="mouse"/>
</dbReference>
<dbReference type="AGR" id="MGI:101763"/>
<dbReference type="CTD" id="1073"/>
<dbReference type="MGI" id="MGI:101763">
    <property type="gene designation" value="Cfl2"/>
</dbReference>
<dbReference type="VEuPathDB" id="HostDB:ENSMUSG00000062929"/>
<dbReference type="eggNOG" id="KOG1735">
    <property type="taxonomic scope" value="Eukaryota"/>
</dbReference>
<dbReference type="GeneTree" id="ENSGT00950000183000"/>
<dbReference type="HOGENOM" id="CLU_094004_0_0_1"/>
<dbReference type="InParanoid" id="P45591"/>
<dbReference type="OMA" id="QCRFAVY"/>
<dbReference type="OrthoDB" id="10249245at2759"/>
<dbReference type="PhylomeDB" id="P45591"/>
<dbReference type="TreeFam" id="TF328601"/>
<dbReference type="BioGRID-ORCS" id="12632">
    <property type="hits" value="2 hits in 79 CRISPR screens"/>
</dbReference>
<dbReference type="CD-CODE" id="CE726F99">
    <property type="entry name" value="Postsynaptic density"/>
</dbReference>
<dbReference type="ChiTaRS" id="Cfl2">
    <property type="organism name" value="mouse"/>
</dbReference>
<dbReference type="PRO" id="PR:P45591"/>
<dbReference type="Proteomes" id="UP000000589">
    <property type="component" value="Chromosome 12"/>
</dbReference>
<dbReference type="RNAct" id="P45591">
    <property type="molecule type" value="protein"/>
</dbReference>
<dbReference type="Bgee" id="ENSMUSG00000062929">
    <property type="expression patterns" value="Expressed in intercostal muscle and 257 other cell types or tissues"/>
</dbReference>
<dbReference type="ExpressionAtlas" id="P45591">
    <property type="expression patterns" value="baseline and differential"/>
</dbReference>
<dbReference type="GO" id="GO:0015629">
    <property type="term" value="C:actin cytoskeleton"/>
    <property type="evidence" value="ECO:0007669"/>
    <property type="project" value="InterPro"/>
</dbReference>
<dbReference type="GO" id="GO:0016363">
    <property type="term" value="C:nuclear matrix"/>
    <property type="evidence" value="ECO:0007669"/>
    <property type="project" value="UniProtKB-SubCell"/>
</dbReference>
<dbReference type="GO" id="GO:0030018">
    <property type="term" value="C:Z disc"/>
    <property type="evidence" value="ECO:0007669"/>
    <property type="project" value="Ensembl"/>
</dbReference>
<dbReference type="GO" id="GO:0051015">
    <property type="term" value="F:actin filament binding"/>
    <property type="evidence" value="ECO:0000314"/>
    <property type="project" value="UniProtKB"/>
</dbReference>
<dbReference type="GO" id="GO:0030042">
    <property type="term" value="P:actin filament depolymerization"/>
    <property type="evidence" value="ECO:0000314"/>
    <property type="project" value="UniProtKB"/>
</dbReference>
<dbReference type="GO" id="GO:0030043">
    <property type="term" value="P:actin filament fragmentation"/>
    <property type="evidence" value="ECO:0000314"/>
    <property type="project" value="UniProtKB"/>
</dbReference>
<dbReference type="GO" id="GO:0007015">
    <property type="term" value="P:actin filament organization"/>
    <property type="evidence" value="ECO:0000315"/>
    <property type="project" value="MGI"/>
</dbReference>
<dbReference type="GO" id="GO:0046716">
    <property type="term" value="P:muscle cell cellular homeostasis"/>
    <property type="evidence" value="ECO:0000315"/>
    <property type="project" value="MGI"/>
</dbReference>
<dbReference type="GO" id="GO:0030836">
    <property type="term" value="P:positive regulation of actin filament depolymerization"/>
    <property type="evidence" value="ECO:0007669"/>
    <property type="project" value="Ensembl"/>
</dbReference>
<dbReference type="GO" id="GO:0045214">
    <property type="term" value="P:sarcomere organization"/>
    <property type="evidence" value="ECO:0000315"/>
    <property type="project" value="MGI"/>
</dbReference>
<dbReference type="GO" id="GO:0007519">
    <property type="term" value="P:skeletal muscle tissue development"/>
    <property type="evidence" value="ECO:0000315"/>
    <property type="project" value="UniProtKB"/>
</dbReference>
<dbReference type="CDD" id="cd11286">
    <property type="entry name" value="ADF_cofilin_like"/>
    <property type="match status" value="1"/>
</dbReference>
<dbReference type="FunFam" id="3.40.20.10:FF:000010">
    <property type="entry name" value="Putative destrin"/>
    <property type="match status" value="1"/>
</dbReference>
<dbReference type="Gene3D" id="3.40.20.10">
    <property type="entry name" value="Severin"/>
    <property type="match status" value="1"/>
</dbReference>
<dbReference type="InterPro" id="IPR002108">
    <property type="entry name" value="ADF-H"/>
</dbReference>
<dbReference type="InterPro" id="IPR029006">
    <property type="entry name" value="ADF-H/Gelsolin-like_dom_sf"/>
</dbReference>
<dbReference type="InterPro" id="IPR017904">
    <property type="entry name" value="ADF/Cofilin"/>
</dbReference>
<dbReference type="PANTHER" id="PTHR11913">
    <property type="entry name" value="COFILIN-RELATED"/>
    <property type="match status" value="1"/>
</dbReference>
<dbReference type="Pfam" id="PF00241">
    <property type="entry name" value="Cofilin_ADF"/>
    <property type="match status" value="1"/>
</dbReference>
<dbReference type="PRINTS" id="PR00006">
    <property type="entry name" value="COFILIN"/>
</dbReference>
<dbReference type="SMART" id="SM00102">
    <property type="entry name" value="ADF"/>
    <property type="match status" value="1"/>
</dbReference>
<dbReference type="SUPFAM" id="SSF55753">
    <property type="entry name" value="Actin depolymerizing proteins"/>
    <property type="match status" value="1"/>
</dbReference>
<dbReference type="PROSITE" id="PS51263">
    <property type="entry name" value="ADF_H"/>
    <property type="match status" value="1"/>
</dbReference>
<reference key="1">
    <citation type="journal article" date="1994" name="J. Biol. Chem.">
        <title>Characterization of a novel cofilin isoform that is predominantly expressed in mammalian skeletal muscle.</title>
        <authorList>
            <person name="Ono S."/>
            <person name="Minami N."/>
            <person name="Abe H."/>
            <person name="Obinata T."/>
        </authorList>
    </citation>
    <scope>NUCLEOTIDE SEQUENCE [MRNA]</scope>
    <source>
        <strain>C3H/HeJ</strain>
        <tissue>Skeletal muscle</tissue>
    </source>
</reference>
<reference key="2">
    <citation type="journal article" date="2004" name="Genome Res.">
        <title>The status, quality, and expansion of the NIH full-length cDNA project: the Mammalian Gene Collection (MGC).</title>
        <authorList>
            <consortium name="The MGC Project Team"/>
        </authorList>
    </citation>
    <scope>NUCLEOTIDE SEQUENCE [LARGE SCALE MRNA]</scope>
</reference>
<reference key="3">
    <citation type="journal article" date="2002" name="Mol. Biol. Cell">
        <title>The three mouse actin-depolymerizing factor/cofilins evolved to fulfill cell-type-specific requirements for actin dynamics.</title>
        <authorList>
            <person name="Vartiainen M.K."/>
            <person name="Mustonen T."/>
            <person name="Mattila P.K."/>
            <person name="Ojala P.J."/>
            <person name="Thesleff I."/>
            <person name="Partanen J."/>
            <person name="Lappalainen P."/>
        </authorList>
    </citation>
    <scope>FUNCTION</scope>
    <scope>TISSUE SPECIFICITY</scope>
</reference>
<reference key="4">
    <citation type="journal article" date="2006" name="Mol. Cell. Proteomics">
        <title>Comprehensive identification of phosphorylation sites in postsynaptic density preparations.</title>
        <authorList>
            <person name="Trinidad J.C."/>
            <person name="Specht C.G."/>
            <person name="Thalhammer A."/>
            <person name="Schoepfer R."/>
            <person name="Burlingame A.L."/>
        </authorList>
    </citation>
    <scope>ACETYLATION [LARGE SCALE ANALYSIS] AT ALA-2</scope>
    <scope>CLEAVAGE OF INITIATOR METHIONINE [LARGE SCALE ANALYSIS]</scope>
    <scope>IDENTIFICATION BY MASS SPECTROMETRY [LARGE SCALE ANALYSIS]</scope>
    <source>
        <tissue>Brain</tissue>
    </source>
</reference>
<reference key="5">
    <citation type="journal article" date="2009" name="Mol. Cell. Proteomics">
        <title>Large scale localization of protein phosphorylation by use of electron capture dissociation mass spectrometry.</title>
        <authorList>
            <person name="Sweet S.M."/>
            <person name="Bailey C.M."/>
            <person name="Cunningham D.L."/>
            <person name="Heath J.K."/>
            <person name="Cooper H.J."/>
        </authorList>
    </citation>
    <scope>ACETYLATION [LARGE SCALE ANALYSIS] AT ALA-2</scope>
    <scope>PHOSPHORYLATION [LARGE SCALE ANALYSIS] AT SER-3 AND THR-6</scope>
    <scope>CLEAVAGE OF INITIATOR METHIONINE [LARGE SCALE ANALYSIS]</scope>
    <scope>IDENTIFICATION BY MASS SPECTROMETRY [LARGE SCALE ANALYSIS]</scope>
    <source>
        <tissue>Embryonic fibroblast</tissue>
    </source>
</reference>
<reference key="6">
    <citation type="journal article" date="2010" name="Cell">
        <title>A tissue-specific atlas of mouse protein phosphorylation and expression.</title>
        <authorList>
            <person name="Huttlin E.L."/>
            <person name="Jedrychowski M.P."/>
            <person name="Elias J.E."/>
            <person name="Goswami T."/>
            <person name="Rad R."/>
            <person name="Beausoleil S.A."/>
            <person name="Villen J."/>
            <person name="Haas W."/>
            <person name="Sowa M.E."/>
            <person name="Gygi S.P."/>
        </authorList>
    </citation>
    <scope>IDENTIFICATION BY MASS SPECTROMETRY [LARGE SCALE ANALYSIS]</scope>
    <source>
        <tissue>Brain</tissue>
        <tissue>Brown adipose tissue</tissue>
        <tissue>Heart</tissue>
        <tissue>Kidney</tissue>
        <tissue>Liver</tissue>
        <tissue>Lung</tissue>
        <tissue>Pancreas</tissue>
        <tissue>Spleen</tissue>
        <tissue>Testis</tissue>
    </source>
</reference>
<reference key="7">
    <citation type="journal article" date="2012" name="Hum. Mol. Genet.">
        <title>Normal myofibrillar development followed by progressive sarcomeric disruption with actin accumulations in a mouse Cfl2 knockout demonstrates requirement of cofilin-2 for muscle maintenance.</title>
        <authorList>
            <person name="Agrawal P.B."/>
            <person name="Joshi M."/>
            <person name="Savic T."/>
            <person name="Chen Z."/>
            <person name="Beggs A.H."/>
        </authorList>
    </citation>
    <scope>FUNCTION</scope>
</reference>
<reference key="8">
    <citation type="journal article" date="2014" name="Eur. J. Cell Biol.">
        <title>Severe protein aggregate myopathy in a knockout mouse model points to an essential role of cofilin2 in sarcomeric actin exchange and muscle maintenance.</title>
        <authorList>
            <person name="Gurniak C.B."/>
            <person name="Chevessier F."/>
            <person name="Jokwitz M."/>
            <person name="Joensson F."/>
            <person name="Perlas E."/>
            <person name="Richter H."/>
            <person name="Matern G."/>
            <person name="Boyl P.P."/>
            <person name="Chaponnier C."/>
            <person name="Fuerst D."/>
            <person name="Schroeder R."/>
            <person name="Witke W."/>
        </authorList>
    </citation>
    <scope>FUNCTION</scope>
</reference>
<keyword id="KW-0007">Acetylation</keyword>
<keyword id="KW-0009">Actin-binding</keyword>
<keyword id="KW-0963">Cytoplasm</keyword>
<keyword id="KW-0206">Cytoskeleton</keyword>
<keyword id="KW-0539">Nucleus</keyword>
<keyword id="KW-0597">Phosphoprotein</keyword>
<keyword id="KW-1185">Reference proteome</keyword>
<comment type="function">
    <text evidence="4 5 6">Controls reversibly actin polymerization and depolymerization in a pH-sensitive manner. It has the ability to bind G- and F-actin in a 1:1 ratio of cofilin to actin. It is the major component of intranuclear and cytoplasmic actin rods. Required for muscle maintenance. May play a role during the exchange of alpha-actin forms during the early postnatal remodeling of the sarcomere.</text>
</comment>
<comment type="subunit">
    <text evidence="1">Interacts with CSRP3; possibly two molecules of CFL2 can interact with one molecule if CSRP3.</text>
</comment>
<comment type="subcellular location">
    <subcellularLocation>
        <location>Nucleus matrix</location>
    </subcellularLocation>
    <subcellularLocation>
        <location>Cytoplasm</location>
        <location>Cytoskeleton</location>
    </subcellularLocation>
    <text evidence="1">Colocalizes with CSPR3 in the Z line of sarcomeres.</text>
</comment>
<comment type="tissue specificity">
    <text evidence="4">Predominantly expressed in skeletal muscle.</text>
</comment>
<comment type="PTM">
    <text>The phosphorylation of Ser-24 may prevent recognition of the nuclear localization signal.</text>
</comment>
<comment type="similarity">
    <text evidence="7">Belongs to the actin-binding proteins ADF family.</text>
</comment>
<accession>P45591</accession>
<feature type="initiator methionine" description="Removed" evidence="8 9">
    <location>
        <position position="1"/>
    </location>
</feature>
<feature type="chain" id="PRO_0000214908" description="Cofilin-2">
    <location>
        <begin position="2"/>
        <end position="166"/>
    </location>
</feature>
<feature type="domain" description="ADF-H" evidence="3">
    <location>
        <begin position="4"/>
        <end position="153"/>
    </location>
</feature>
<feature type="short sequence motif" description="Nuclear localization signal" evidence="2">
    <location>
        <begin position="30"/>
        <end position="34"/>
    </location>
</feature>
<feature type="modified residue" description="N-acetylalanine" evidence="8 9">
    <location>
        <position position="2"/>
    </location>
</feature>
<feature type="modified residue" description="Phosphoserine" evidence="9">
    <location>
        <position position="3"/>
    </location>
</feature>
<feature type="modified residue" description="Phosphothreonine" evidence="9">
    <location>
        <position position="6"/>
    </location>
</feature>